<accession>A9M5F5</accession>
<protein>
    <recommendedName>
        <fullName evidence="1">Cyclic pyranopterin monophosphate synthase</fullName>
        <ecNumber evidence="1">4.6.1.17</ecNumber>
    </recommendedName>
    <alternativeName>
        <fullName evidence="1">Molybdenum cofactor biosynthesis protein C</fullName>
    </alternativeName>
</protein>
<feature type="chain" id="PRO_1000085668" description="Cyclic pyranopterin monophosphate synthase">
    <location>
        <begin position="1"/>
        <end position="165"/>
    </location>
</feature>
<feature type="active site" evidence="1">
    <location>
        <position position="129"/>
    </location>
</feature>
<feature type="binding site" evidence="1">
    <location>
        <begin position="76"/>
        <end position="78"/>
    </location>
    <ligand>
        <name>substrate</name>
    </ligand>
</feature>
<feature type="binding site" evidence="1">
    <location>
        <begin position="114"/>
        <end position="115"/>
    </location>
    <ligand>
        <name>substrate</name>
    </ligand>
</feature>
<organism>
    <name type="scientific">Brucella canis (strain ATCC 23365 / NCTC 10854 / RM-666)</name>
    <dbReference type="NCBI Taxonomy" id="483179"/>
    <lineage>
        <taxon>Bacteria</taxon>
        <taxon>Pseudomonadati</taxon>
        <taxon>Pseudomonadota</taxon>
        <taxon>Alphaproteobacteria</taxon>
        <taxon>Hyphomicrobiales</taxon>
        <taxon>Brucellaceae</taxon>
        <taxon>Brucella/Ochrobactrum group</taxon>
        <taxon>Brucella</taxon>
    </lineage>
</organism>
<keyword id="KW-0456">Lyase</keyword>
<keyword id="KW-0501">Molybdenum cofactor biosynthesis</keyword>
<keyword id="KW-1185">Reference proteome</keyword>
<gene>
    <name evidence="1" type="primary">moaC</name>
    <name type="ordered locus">BCAN_A1161</name>
</gene>
<proteinExistence type="inferred from homology"/>
<reference key="1">
    <citation type="submission" date="2007-10" db="EMBL/GenBank/DDBJ databases">
        <title>Brucella canis ATCC 23365 whole genome shotgun sequencing project.</title>
        <authorList>
            <person name="Setubal J.C."/>
            <person name="Bowns C."/>
            <person name="Boyle S."/>
            <person name="Crasta O.R."/>
            <person name="Czar M.J."/>
            <person name="Dharmanolla C."/>
            <person name="Gillespie J.J."/>
            <person name="Kenyon R.W."/>
            <person name="Lu J."/>
            <person name="Mane S."/>
            <person name="Mohapatra S."/>
            <person name="Nagrani S."/>
            <person name="Purkayastha A."/>
            <person name="Rajasimha H.K."/>
            <person name="Shallom J.M."/>
            <person name="Shallom S."/>
            <person name="Shukla M."/>
            <person name="Snyder E.E."/>
            <person name="Sobral B.W."/>
            <person name="Wattam A.R."/>
            <person name="Will R."/>
            <person name="Williams K."/>
            <person name="Yoo H."/>
            <person name="Bruce D."/>
            <person name="Detter C."/>
            <person name="Munk C."/>
            <person name="Brettin T.S."/>
        </authorList>
    </citation>
    <scope>NUCLEOTIDE SEQUENCE [LARGE SCALE GENOMIC DNA]</scope>
    <source>
        <strain>ATCC 23365 / NCTC 10854 / RM-666</strain>
    </source>
</reference>
<name>MOAC_BRUC2</name>
<sequence length="165" mass="17579">MSGKLTHIDQTGAANMVDVGSKDETERQAVAEGAVRMKPETLALILEGNAAKGDVIGTARLAGIMAAKRTSDLIPLCHPLMLTKVAVEIEPDENLPGLRVRALARLKGRTGVEMEALTAASVTCLTIYDMAKAVDRHMEIGSIRVIEKSGRKSGDWAVSDPASMR</sequence>
<dbReference type="EC" id="4.6.1.17" evidence="1"/>
<dbReference type="EMBL" id="CP000872">
    <property type="protein sequence ID" value="ABX62210.1"/>
    <property type="molecule type" value="Genomic_DNA"/>
</dbReference>
<dbReference type="RefSeq" id="WP_004690889.1">
    <property type="nucleotide sequence ID" value="NC_010103.1"/>
</dbReference>
<dbReference type="SMR" id="A9M5F5"/>
<dbReference type="GeneID" id="55590825"/>
<dbReference type="KEGG" id="bcs:BCAN_A1161"/>
<dbReference type="HOGENOM" id="CLU_074693_1_1_5"/>
<dbReference type="PhylomeDB" id="A9M5F5"/>
<dbReference type="UniPathway" id="UPA00344"/>
<dbReference type="Proteomes" id="UP000001385">
    <property type="component" value="Chromosome I"/>
</dbReference>
<dbReference type="GO" id="GO:0061799">
    <property type="term" value="F:cyclic pyranopterin monophosphate synthase activity"/>
    <property type="evidence" value="ECO:0007669"/>
    <property type="project" value="UniProtKB-UniRule"/>
</dbReference>
<dbReference type="GO" id="GO:0006777">
    <property type="term" value="P:Mo-molybdopterin cofactor biosynthetic process"/>
    <property type="evidence" value="ECO:0007669"/>
    <property type="project" value="UniProtKB-UniRule"/>
</dbReference>
<dbReference type="CDD" id="cd01420">
    <property type="entry name" value="MoaC_PE"/>
    <property type="match status" value="1"/>
</dbReference>
<dbReference type="Gene3D" id="3.30.70.640">
    <property type="entry name" value="Molybdopterin cofactor biosynthesis C (MoaC) domain"/>
    <property type="match status" value="1"/>
</dbReference>
<dbReference type="HAMAP" id="MF_01224_B">
    <property type="entry name" value="MoaC_B"/>
    <property type="match status" value="1"/>
</dbReference>
<dbReference type="InterPro" id="IPR023045">
    <property type="entry name" value="MoaC"/>
</dbReference>
<dbReference type="InterPro" id="IPR047594">
    <property type="entry name" value="MoaC_bact/euk"/>
</dbReference>
<dbReference type="InterPro" id="IPR036522">
    <property type="entry name" value="MoaC_sf"/>
</dbReference>
<dbReference type="InterPro" id="IPR050105">
    <property type="entry name" value="MoCo_biosynth_MoaA/MoaC"/>
</dbReference>
<dbReference type="InterPro" id="IPR002820">
    <property type="entry name" value="Mopterin_CF_biosynth-C_dom"/>
</dbReference>
<dbReference type="NCBIfam" id="TIGR00581">
    <property type="entry name" value="moaC"/>
    <property type="match status" value="1"/>
</dbReference>
<dbReference type="NCBIfam" id="NF006870">
    <property type="entry name" value="PRK09364.1"/>
    <property type="match status" value="1"/>
</dbReference>
<dbReference type="PANTHER" id="PTHR22960">
    <property type="entry name" value="MOLYBDOPTERIN COFACTOR SYNTHESIS PROTEIN A"/>
    <property type="match status" value="1"/>
</dbReference>
<dbReference type="Pfam" id="PF01967">
    <property type="entry name" value="MoaC"/>
    <property type="match status" value="1"/>
</dbReference>
<dbReference type="SUPFAM" id="SSF55040">
    <property type="entry name" value="Molybdenum cofactor biosynthesis protein C, MoaC"/>
    <property type="match status" value="1"/>
</dbReference>
<evidence type="ECO:0000255" key="1">
    <source>
        <dbReference type="HAMAP-Rule" id="MF_01224"/>
    </source>
</evidence>
<comment type="function">
    <text evidence="1">Catalyzes the conversion of (8S)-3',8-cyclo-7,8-dihydroguanosine 5'-triphosphate to cyclic pyranopterin monophosphate (cPMP).</text>
</comment>
<comment type="catalytic activity">
    <reaction evidence="1">
        <text>(8S)-3',8-cyclo-7,8-dihydroguanosine 5'-triphosphate = cyclic pyranopterin phosphate + diphosphate</text>
        <dbReference type="Rhea" id="RHEA:49580"/>
        <dbReference type="ChEBI" id="CHEBI:33019"/>
        <dbReference type="ChEBI" id="CHEBI:59648"/>
        <dbReference type="ChEBI" id="CHEBI:131766"/>
        <dbReference type="EC" id="4.6.1.17"/>
    </reaction>
</comment>
<comment type="pathway">
    <text evidence="1">Cofactor biosynthesis; molybdopterin biosynthesis.</text>
</comment>
<comment type="subunit">
    <text evidence="1">Homohexamer; trimer of dimers.</text>
</comment>
<comment type="similarity">
    <text evidence="1">Belongs to the MoaC family.</text>
</comment>